<name>HSCB_YERPA</name>
<protein>
    <recommendedName>
        <fullName evidence="1">Co-chaperone protein HscB</fullName>
    </recommendedName>
    <alternativeName>
        <fullName evidence="1">Hsc20</fullName>
    </alternativeName>
</protein>
<evidence type="ECO:0000255" key="1">
    <source>
        <dbReference type="HAMAP-Rule" id="MF_00682"/>
    </source>
</evidence>
<sequence length="174" mass="20635">MDYFTLFGLPARYLIDGNQLTTRYQELQRQFHPDRFATQPERERLASMQQAATINDAYQTLKHPLKRAEYMLSLQGFDLGNEQHTMRDTAFLMEQLELREELDAIERKPDAETLLAEFSRRVAQMTTTRTQQMVEQLDAQLWVQAADTVRKLRFLDKLQQQVEQLEERLFDDFA</sequence>
<dbReference type="EMBL" id="CP000308">
    <property type="protein sequence ID" value="ABG14299.1"/>
    <property type="molecule type" value="Genomic_DNA"/>
</dbReference>
<dbReference type="RefSeq" id="WP_002209833.1">
    <property type="nucleotide sequence ID" value="NZ_CP009906.1"/>
</dbReference>
<dbReference type="SMR" id="Q1C5H3"/>
<dbReference type="GeneID" id="57975850"/>
<dbReference type="KEGG" id="ypa:YPA_2334"/>
<dbReference type="Proteomes" id="UP000001971">
    <property type="component" value="Chromosome"/>
</dbReference>
<dbReference type="GO" id="GO:1990230">
    <property type="term" value="C:iron-sulfur cluster transfer complex"/>
    <property type="evidence" value="ECO:0007669"/>
    <property type="project" value="TreeGrafter"/>
</dbReference>
<dbReference type="GO" id="GO:0001671">
    <property type="term" value="F:ATPase activator activity"/>
    <property type="evidence" value="ECO:0007669"/>
    <property type="project" value="InterPro"/>
</dbReference>
<dbReference type="GO" id="GO:0051087">
    <property type="term" value="F:protein-folding chaperone binding"/>
    <property type="evidence" value="ECO:0007669"/>
    <property type="project" value="InterPro"/>
</dbReference>
<dbReference type="GO" id="GO:0044571">
    <property type="term" value="P:[2Fe-2S] cluster assembly"/>
    <property type="evidence" value="ECO:0007669"/>
    <property type="project" value="InterPro"/>
</dbReference>
<dbReference type="GO" id="GO:0051259">
    <property type="term" value="P:protein complex oligomerization"/>
    <property type="evidence" value="ECO:0007669"/>
    <property type="project" value="InterPro"/>
</dbReference>
<dbReference type="GO" id="GO:0006457">
    <property type="term" value="P:protein folding"/>
    <property type="evidence" value="ECO:0007669"/>
    <property type="project" value="UniProtKB-UniRule"/>
</dbReference>
<dbReference type="CDD" id="cd06257">
    <property type="entry name" value="DnaJ"/>
    <property type="match status" value="1"/>
</dbReference>
<dbReference type="FunFam" id="1.10.287.110:FF:000008">
    <property type="entry name" value="Co-chaperone protein HscB"/>
    <property type="match status" value="1"/>
</dbReference>
<dbReference type="Gene3D" id="1.10.287.110">
    <property type="entry name" value="DnaJ domain"/>
    <property type="match status" value="1"/>
</dbReference>
<dbReference type="Gene3D" id="1.20.1280.20">
    <property type="entry name" value="HscB, C-terminal domain"/>
    <property type="match status" value="1"/>
</dbReference>
<dbReference type="HAMAP" id="MF_00682">
    <property type="entry name" value="HscB"/>
    <property type="match status" value="1"/>
</dbReference>
<dbReference type="InterPro" id="IPR001623">
    <property type="entry name" value="DnaJ_domain"/>
</dbReference>
<dbReference type="InterPro" id="IPR004640">
    <property type="entry name" value="HscB"/>
</dbReference>
<dbReference type="InterPro" id="IPR036386">
    <property type="entry name" value="HscB_C_sf"/>
</dbReference>
<dbReference type="InterPro" id="IPR009073">
    <property type="entry name" value="HscB_oligo_C"/>
</dbReference>
<dbReference type="InterPro" id="IPR036869">
    <property type="entry name" value="J_dom_sf"/>
</dbReference>
<dbReference type="NCBIfam" id="TIGR00714">
    <property type="entry name" value="hscB"/>
    <property type="match status" value="1"/>
</dbReference>
<dbReference type="NCBIfam" id="NF003449">
    <property type="entry name" value="PRK05014.1"/>
    <property type="match status" value="1"/>
</dbReference>
<dbReference type="PANTHER" id="PTHR14021">
    <property type="entry name" value="IRON-SULFUR CLUSTER CO-CHAPERONE PROTEIN HSCB"/>
    <property type="match status" value="1"/>
</dbReference>
<dbReference type="PANTHER" id="PTHR14021:SF15">
    <property type="entry name" value="IRON-SULFUR CLUSTER CO-CHAPERONE PROTEIN HSCB"/>
    <property type="match status" value="1"/>
</dbReference>
<dbReference type="Pfam" id="PF00226">
    <property type="entry name" value="DnaJ"/>
    <property type="match status" value="1"/>
</dbReference>
<dbReference type="Pfam" id="PF07743">
    <property type="entry name" value="HSCB_C"/>
    <property type="match status" value="1"/>
</dbReference>
<dbReference type="SMART" id="SM00271">
    <property type="entry name" value="DnaJ"/>
    <property type="match status" value="1"/>
</dbReference>
<dbReference type="SUPFAM" id="SSF46565">
    <property type="entry name" value="Chaperone J-domain"/>
    <property type="match status" value="1"/>
</dbReference>
<dbReference type="SUPFAM" id="SSF47144">
    <property type="entry name" value="HSC20 (HSCB), C-terminal oligomerisation domain"/>
    <property type="match status" value="1"/>
</dbReference>
<dbReference type="PROSITE" id="PS50076">
    <property type="entry name" value="DNAJ_2"/>
    <property type="match status" value="1"/>
</dbReference>
<keyword id="KW-0143">Chaperone</keyword>
<comment type="function">
    <text evidence="1">Co-chaperone involved in the maturation of iron-sulfur cluster-containing proteins. Seems to help targeting proteins to be folded toward HscA.</text>
</comment>
<comment type="subunit">
    <text evidence="1">Interacts with HscA and stimulates its ATPase activity. Interacts with IscU.</text>
</comment>
<comment type="similarity">
    <text evidence="1">Belongs to the HscB family.</text>
</comment>
<gene>
    <name evidence="1" type="primary">hscB</name>
    <name type="ordered locus">YPA_2334</name>
</gene>
<feature type="chain" id="PRO_1000083055" description="Co-chaperone protein HscB">
    <location>
        <begin position="1"/>
        <end position="174"/>
    </location>
</feature>
<feature type="domain" description="J" evidence="1">
    <location>
        <begin position="2"/>
        <end position="74"/>
    </location>
</feature>
<reference key="1">
    <citation type="journal article" date="2006" name="J. Bacteriol.">
        <title>Complete genome sequence of Yersinia pestis strains Antiqua and Nepal516: evidence of gene reduction in an emerging pathogen.</title>
        <authorList>
            <person name="Chain P.S.G."/>
            <person name="Hu P."/>
            <person name="Malfatti S.A."/>
            <person name="Radnedge L."/>
            <person name="Larimer F."/>
            <person name="Vergez L.M."/>
            <person name="Worsham P."/>
            <person name="Chu M.C."/>
            <person name="Andersen G.L."/>
        </authorList>
    </citation>
    <scope>NUCLEOTIDE SEQUENCE [LARGE SCALE GENOMIC DNA]</scope>
    <source>
        <strain>Antiqua</strain>
    </source>
</reference>
<proteinExistence type="inferred from homology"/>
<accession>Q1C5H3</accession>
<organism>
    <name type="scientific">Yersinia pestis bv. Antiqua (strain Antiqua)</name>
    <dbReference type="NCBI Taxonomy" id="360102"/>
    <lineage>
        <taxon>Bacteria</taxon>
        <taxon>Pseudomonadati</taxon>
        <taxon>Pseudomonadota</taxon>
        <taxon>Gammaproteobacteria</taxon>
        <taxon>Enterobacterales</taxon>
        <taxon>Yersiniaceae</taxon>
        <taxon>Yersinia</taxon>
    </lineage>
</organism>